<proteinExistence type="inferred from homology"/>
<dbReference type="EMBL" id="CP001164">
    <property type="protein sequence ID" value="ACI36447.1"/>
    <property type="molecule type" value="Genomic_DNA"/>
</dbReference>
<dbReference type="RefSeq" id="WP_000108469.1">
    <property type="nucleotide sequence ID" value="NC_011353.1"/>
</dbReference>
<dbReference type="SMR" id="B5YSV1"/>
<dbReference type="KEGG" id="ecf:ECH74115_4541"/>
<dbReference type="HOGENOM" id="CLU_001265_46_8_6"/>
<dbReference type="GO" id="GO:0005886">
    <property type="term" value="C:plasma membrane"/>
    <property type="evidence" value="ECO:0007669"/>
    <property type="project" value="UniProtKB-SubCell"/>
</dbReference>
<dbReference type="GO" id="GO:0046943">
    <property type="term" value="F:carboxylic acid transmembrane transporter activity"/>
    <property type="evidence" value="ECO:0007669"/>
    <property type="project" value="TreeGrafter"/>
</dbReference>
<dbReference type="GO" id="GO:0015538">
    <property type="term" value="F:sialic acid:proton symporter activity"/>
    <property type="evidence" value="ECO:0007669"/>
    <property type="project" value="UniProtKB-UniRule"/>
</dbReference>
<dbReference type="CDD" id="cd17316">
    <property type="entry name" value="MFS_SV2_like"/>
    <property type="match status" value="1"/>
</dbReference>
<dbReference type="FunFam" id="1.20.1250.20:FF:000027">
    <property type="entry name" value="Sialic acid transporter NanT"/>
    <property type="match status" value="1"/>
</dbReference>
<dbReference type="FunFam" id="1.20.1250.20:FF:000038">
    <property type="entry name" value="Sialic acid transporter NanT"/>
    <property type="match status" value="1"/>
</dbReference>
<dbReference type="Gene3D" id="1.20.1250.20">
    <property type="entry name" value="MFS general substrate transporter like domains"/>
    <property type="match status" value="2"/>
</dbReference>
<dbReference type="HAMAP" id="MF_01238">
    <property type="entry name" value="MFS_NanT"/>
    <property type="match status" value="1"/>
</dbReference>
<dbReference type="InterPro" id="IPR011701">
    <property type="entry name" value="MFS"/>
</dbReference>
<dbReference type="InterPro" id="IPR020846">
    <property type="entry name" value="MFS_dom"/>
</dbReference>
<dbReference type="InterPro" id="IPR036259">
    <property type="entry name" value="MFS_trans_sf"/>
</dbReference>
<dbReference type="InterPro" id="IPR004742">
    <property type="entry name" value="SA_transporter"/>
</dbReference>
<dbReference type="NCBIfam" id="TIGR00891">
    <property type="entry name" value="2A0112"/>
    <property type="match status" value="1"/>
</dbReference>
<dbReference type="NCBIfam" id="NF003024">
    <property type="entry name" value="PRK03893.1"/>
    <property type="match status" value="1"/>
</dbReference>
<dbReference type="PANTHER" id="PTHR23508">
    <property type="entry name" value="CARBOXYLIC ACID TRANSPORTER PROTEIN HOMOLOG"/>
    <property type="match status" value="1"/>
</dbReference>
<dbReference type="PANTHER" id="PTHR23508:SF3">
    <property type="entry name" value="SIALIC ACID TRANSPORTER NANT"/>
    <property type="match status" value="1"/>
</dbReference>
<dbReference type="Pfam" id="PF07690">
    <property type="entry name" value="MFS_1"/>
    <property type="match status" value="1"/>
</dbReference>
<dbReference type="SUPFAM" id="SSF103473">
    <property type="entry name" value="MFS general substrate transporter"/>
    <property type="match status" value="1"/>
</dbReference>
<dbReference type="PROSITE" id="PS50850">
    <property type="entry name" value="MFS"/>
    <property type="match status" value="1"/>
</dbReference>
<evidence type="ECO:0000255" key="1">
    <source>
        <dbReference type="HAMAP-Rule" id="MF_01238"/>
    </source>
</evidence>
<organism>
    <name type="scientific">Escherichia coli O157:H7 (strain EC4115 / EHEC)</name>
    <dbReference type="NCBI Taxonomy" id="444450"/>
    <lineage>
        <taxon>Bacteria</taxon>
        <taxon>Pseudomonadati</taxon>
        <taxon>Pseudomonadota</taxon>
        <taxon>Gammaproteobacteria</taxon>
        <taxon>Enterobacterales</taxon>
        <taxon>Enterobacteriaceae</taxon>
        <taxon>Escherichia</taxon>
    </lineage>
</organism>
<sequence>MSTTTQNIPWYRHLNRAQWRAFSAAWLGYLLDGFDFVLIALVLTEVQGEFGLTTVQAASLISAAFISRWFGGLMLGAMGDRYGRRLAMVTSIVLFSAGTLACGFAPGYITMFIARLVIGMGMAGEYGSSATYVIESWPKHLRNKASGFLISGFSVGAVVAAQVYSLVVPVWGWRALFFIGILPIIFALWLRKNIPEAEDWKEKHAGKAPVRTMVDILYRGEHRIANIVMTLAAATALWFCFAGNLQNAAIVAVLGLLCTAIFISFMVQSTGKRWPTGVMLMVVVLFAFLYSWPIQALLPTYLKTDLAYNPHTVANVLFFSGFGAAVGCCVGGFLGDWLGTRKAYVCSLLASQLLIIPVFAIGGANVWVLGLLLFFQQMLGQGIAGILPKLIGGYFDTDQRAAGLGFTYNVGALGGALAPIIGALIAQRLDLGTALASLSFSLTFVVILLIGLDMPSRVQRWLRPEALRTHDAIDGKPFSGAVPFGSAKNDLVKTKS</sequence>
<gene>
    <name evidence="1" type="primary">nanT</name>
    <name type="ordered locus">ECH74115_4541</name>
</gene>
<protein>
    <recommendedName>
        <fullName evidence="1">Sialic acid transporter NanT</fullName>
    </recommendedName>
    <alternativeName>
        <fullName evidence="1">Sialic acid permease</fullName>
    </alternativeName>
    <alternativeName>
        <fullName evidence="1">Sialic acid/H(+) symporter</fullName>
    </alternativeName>
</protein>
<accession>B5YSV1</accession>
<comment type="function">
    <text evidence="1">Catalyzes the proton-dependent transport of sialic acid.</text>
</comment>
<comment type="catalytic activity">
    <reaction evidence="1">
        <text>N-acetylneuraminate(in) + H(+)(in) = N-acetylneuraminate(out) + H(+)(out)</text>
        <dbReference type="Rhea" id="RHEA:28987"/>
        <dbReference type="ChEBI" id="CHEBI:15378"/>
        <dbReference type="ChEBI" id="CHEBI:35418"/>
    </reaction>
</comment>
<comment type="subcellular location">
    <subcellularLocation>
        <location evidence="1">Cell inner membrane</location>
        <topology evidence="1">Multi-pass membrane protein</topology>
    </subcellularLocation>
</comment>
<comment type="similarity">
    <text evidence="1">Belongs to the major facilitator superfamily. Sialate:H(+) symporter (SHS) (TC 2.A.1.12) family.</text>
</comment>
<feature type="chain" id="PRO_1000214043" description="Sialic acid transporter NanT">
    <location>
        <begin position="1"/>
        <end position="496"/>
    </location>
</feature>
<feature type="transmembrane region" description="Helical" evidence="1">
    <location>
        <begin position="22"/>
        <end position="42"/>
    </location>
</feature>
<feature type="transmembrane region" description="Helical" evidence="1">
    <location>
        <begin position="58"/>
        <end position="78"/>
    </location>
</feature>
<feature type="transmembrane region" description="Helical" evidence="1">
    <location>
        <begin position="92"/>
        <end position="112"/>
    </location>
</feature>
<feature type="transmembrane region" description="Helical" evidence="1">
    <location>
        <begin position="116"/>
        <end position="136"/>
    </location>
</feature>
<feature type="transmembrane region" description="Helical" evidence="1">
    <location>
        <begin position="148"/>
        <end position="168"/>
    </location>
</feature>
<feature type="transmembrane region" description="Helical" evidence="1">
    <location>
        <begin position="170"/>
        <end position="190"/>
    </location>
</feature>
<feature type="transmembrane region" description="Helical" evidence="1">
    <location>
        <begin position="224"/>
        <end position="244"/>
    </location>
</feature>
<feature type="transmembrane region" description="Helical" evidence="1">
    <location>
        <begin position="247"/>
        <end position="267"/>
    </location>
</feature>
<feature type="transmembrane region" description="Helical" evidence="1">
    <location>
        <begin position="278"/>
        <end position="298"/>
    </location>
</feature>
<feature type="transmembrane region" description="Helical" evidence="1">
    <location>
        <begin position="313"/>
        <end position="333"/>
    </location>
</feature>
<feature type="transmembrane region" description="Helical" evidence="1">
    <location>
        <begin position="353"/>
        <end position="375"/>
    </location>
</feature>
<feature type="transmembrane region" description="Helical" evidence="1">
    <location>
        <begin position="406"/>
        <end position="426"/>
    </location>
</feature>
<feature type="transmembrane region" description="Helical" evidence="1">
    <location>
        <begin position="431"/>
        <end position="451"/>
    </location>
</feature>
<reference key="1">
    <citation type="journal article" date="2011" name="Proc. Natl. Acad. Sci. U.S.A.">
        <title>Genomic anatomy of Escherichia coli O157:H7 outbreaks.</title>
        <authorList>
            <person name="Eppinger M."/>
            <person name="Mammel M.K."/>
            <person name="Leclerc J.E."/>
            <person name="Ravel J."/>
            <person name="Cebula T.A."/>
        </authorList>
    </citation>
    <scope>NUCLEOTIDE SEQUENCE [LARGE SCALE GENOMIC DNA]</scope>
    <source>
        <strain>EC4115 / EHEC</strain>
    </source>
</reference>
<name>NANT_ECO5E</name>
<keyword id="KW-0997">Cell inner membrane</keyword>
<keyword id="KW-1003">Cell membrane</keyword>
<keyword id="KW-0472">Membrane</keyword>
<keyword id="KW-0762">Sugar transport</keyword>
<keyword id="KW-0812">Transmembrane</keyword>
<keyword id="KW-1133">Transmembrane helix</keyword>
<keyword id="KW-0813">Transport</keyword>